<name>LIPA_NEOFI</name>
<feature type="transit peptide" description="Mitochondrion" evidence="1">
    <location>
        <begin position="1"/>
        <end position="32"/>
    </location>
</feature>
<feature type="chain" id="PRO_0000398274" description="Lipoyl synthase, mitochondrial">
    <location>
        <begin position="33"/>
        <end position="415"/>
    </location>
</feature>
<feature type="domain" description="Radical SAM core" evidence="2">
    <location>
        <begin position="146"/>
        <end position="367"/>
    </location>
</feature>
<feature type="region of interest" description="Disordered" evidence="3">
    <location>
        <begin position="30"/>
        <end position="50"/>
    </location>
</feature>
<feature type="compositionally biased region" description="Low complexity" evidence="3">
    <location>
        <begin position="33"/>
        <end position="49"/>
    </location>
</feature>
<feature type="binding site" evidence="1">
    <location>
        <position position="132"/>
    </location>
    <ligand>
        <name>[4Fe-4S] cluster</name>
        <dbReference type="ChEBI" id="CHEBI:49883"/>
        <label>1</label>
    </ligand>
</feature>
<feature type="binding site" evidence="1">
    <location>
        <position position="137"/>
    </location>
    <ligand>
        <name>[4Fe-4S] cluster</name>
        <dbReference type="ChEBI" id="CHEBI:49883"/>
        <label>1</label>
    </ligand>
</feature>
<feature type="binding site" evidence="1">
    <location>
        <position position="143"/>
    </location>
    <ligand>
        <name>[4Fe-4S] cluster</name>
        <dbReference type="ChEBI" id="CHEBI:49883"/>
        <label>1</label>
    </ligand>
</feature>
<feature type="binding site" evidence="1">
    <location>
        <position position="163"/>
    </location>
    <ligand>
        <name>[4Fe-4S] cluster</name>
        <dbReference type="ChEBI" id="CHEBI:49883"/>
        <label>2</label>
        <note>4Fe-4S-S-AdoMet</note>
    </ligand>
</feature>
<feature type="binding site" evidence="1">
    <location>
        <position position="167"/>
    </location>
    <ligand>
        <name>[4Fe-4S] cluster</name>
        <dbReference type="ChEBI" id="CHEBI:49883"/>
        <label>2</label>
        <note>4Fe-4S-S-AdoMet</note>
    </ligand>
</feature>
<feature type="binding site" evidence="1">
    <location>
        <position position="170"/>
    </location>
    <ligand>
        <name>[4Fe-4S] cluster</name>
        <dbReference type="ChEBI" id="CHEBI:49883"/>
        <label>2</label>
        <note>4Fe-4S-S-AdoMet</note>
    </ligand>
</feature>
<feature type="binding site" evidence="1">
    <location>
        <position position="378"/>
    </location>
    <ligand>
        <name>[4Fe-4S] cluster</name>
        <dbReference type="ChEBI" id="CHEBI:49883"/>
        <label>1</label>
    </ligand>
</feature>
<gene>
    <name type="ORF">NFIA_070700</name>
</gene>
<reference key="1">
    <citation type="journal article" date="2008" name="PLoS Genet.">
        <title>Genomic islands in the pathogenic filamentous fungus Aspergillus fumigatus.</title>
        <authorList>
            <person name="Fedorova N.D."/>
            <person name="Khaldi N."/>
            <person name="Joardar V.S."/>
            <person name="Maiti R."/>
            <person name="Amedeo P."/>
            <person name="Anderson M.J."/>
            <person name="Crabtree J."/>
            <person name="Silva J.C."/>
            <person name="Badger J.H."/>
            <person name="Albarraq A."/>
            <person name="Angiuoli S."/>
            <person name="Bussey H."/>
            <person name="Bowyer P."/>
            <person name="Cotty P.J."/>
            <person name="Dyer P.S."/>
            <person name="Egan A."/>
            <person name="Galens K."/>
            <person name="Fraser-Liggett C.M."/>
            <person name="Haas B.J."/>
            <person name="Inman J.M."/>
            <person name="Kent R."/>
            <person name="Lemieux S."/>
            <person name="Malavazi I."/>
            <person name="Orvis J."/>
            <person name="Roemer T."/>
            <person name="Ronning C.M."/>
            <person name="Sundaram J.P."/>
            <person name="Sutton G."/>
            <person name="Turner G."/>
            <person name="Venter J.C."/>
            <person name="White O.R."/>
            <person name="Whitty B.R."/>
            <person name="Youngman P."/>
            <person name="Wolfe K.H."/>
            <person name="Goldman G.H."/>
            <person name="Wortman J.R."/>
            <person name="Jiang B."/>
            <person name="Denning D.W."/>
            <person name="Nierman W.C."/>
        </authorList>
    </citation>
    <scope>NUCLEOTIDE SEQUENCE [LARGE SCALE GENOMIC DNA]</scope>
    <source>
        <strain>ATCC 1020 / DSM 3700 / CBS 544.65 / FGSC A1164 / JCM 1740 / NRRL 181 / WB 181</strain>
    </source>
</reference>
<comment type="function">
    <text evidence="1">Catalyzes the radical-mediated insertion of two sulfur atoms into the C-6 and C-8 positions of the octanoyl moiety bound to the lipoyl domains of lipoate-dependent enzymes, thereby converting the octanoylated domains into lipoylated derivatives.</text>
</comment>
<comment type="catalytic activity">
    <reaction evidence="1">
        <text>[[Fe-S] cluster scaffold protein carrying a second [4Fe-4S](2+) cluster] + N(6)-octanoyl-L-lysyl-[protein] + 2 oxidized [2Fe-2S]-[ferredoxin] + 2 S-adenosyl-L-methionine + 4 H(+) = [[Fe-S] cluster scaffold protein] + N(6)-[(R)-dihydrolipoyl]-L-lysyl-[protein] + 4 Fe(3+) + 2 hydrogen sulfide + 2 5'-deoxyadenosine + 2 L-methionine + 2 reduced [2Fe-2S]-[ferredoxin]</text>
        <dbReference type="Rhea" id="RHEA:16585"/>
        <dbReference type="Rhea" id="RHEA-COMP:9928"/>
        <dbReference type="Rhea" id="RHEA-COMP:10000"/>
        <dbReference type="Rhea" id="RHEA-COMP:10001"/>
        <dbReference type="Rhea" id="RHEA-COMP:10475"/>
        <dbReference type="Rhea" id="RHEA-COMP:14568"/>
        <dbReference type="Rhea" id="RHEA-COMP:14569"/>
        <dbReference type="ChEBI" id="CHEBI:15378"/>
        <dbReference type="ChEBI" id="CHEBI:17319"/>
        <dbReference type="ChEBI" id="CHEBI:29034"/>
        <dbReference type="ChEBI" id="CHEBI:29919"/>
        <dbReference type="ChEBI" id="CHEBI:33722"/>
        <dbReference type="ChEBI" id="CHEBI:33737"/>
        <dbReference type="ChEBI" id="CHEBI:33738"/>
        <dbReference type="ChEBI" id="CHEBI:57844"/>
        <dbReference type="ChEBI" id="CHEBI:59789"/>
        <dbReference type="ChEBI" id="CHEBI:78809"/>
        <dbReference type="ChEBI" id="CHEBI:83100"/>
        <dbReference type="EC" id="2.8.1.8"/>
    </reaction>
</comment>
<comment type="cofactor">
    <cofactor evidence="1">
        <name>[4Fe-4S] cluster</name>
        <dbReference type="ChEBI" id="CHEBI:49883"/>
    </cofactor>
    <text evidence="1">Binds 2 [4Fe-4S] clusters per subunit. One cluster is coordinated with 3 cysteines and an exchangeable S-adenosyl-L-methionine.</text>
</comment>
<comment type="pathway">
    <text evidence="1">Protein modification; protein lipoylation via endogenous pathway; protein N(6)-(lipoyl)lysine from octanoyl-[acyl-carrier-protein]: step 2/2.</text>
</comment>
<comment type="subcellular location">
    <subcellularLocation>
        <location evidence="1">Mitochondrion</location>
    </subcellularLocation>
</comment>
<comment type="similarity">
    <text evidence="1">Belongs to the radical SAM superfamily. Lipoyl synthase family.</text>
</comment>
<proteinExistence type="inferred from homology"/>
<accession>A1D855</accession>
<protein>
    <recommendedName>
        <fullName evidence="1">Lipoyl synthase, mitochondrial</fullName>
        <ecNumber evidence="1">2.8.1.8</ecNumber>
    </recommendedName>
    <alternativeName>
        <fullName evidence="1">Lipoate synthase</fullName>
        <shortName evidence="1">LS</shortName>
        <shortName evidence="1">Lip-syn</shortName>
    </alternativeName>
    <alternativeName>
        <fullName evidence="1">Lipoic acid synthase</fullName>
    </alternativeName>
</protein>
<keyword id="KW-0004">4Fe-4S</keyword>
<keyword id="KW-0408">Iron</keyword>
<keyword id="KW-0411">Iron-sulfur</keyword>
<keyword id="KW-0479">Metal-binding</keyword>
<keyword id="KW-0496">Mitochondrion</keyword>
<keyword id="KW-1185">Reference proteome</keyword>
<keyword id="KW-0949">S-adenosyl-L-methionine</keyword>
<keyword id="KW-0808">Transferase</keyword>
<keyword id="KW-0809">Transit peptide</keyword>
<sequence>MAVSTSHFRSLCASSRSLSRTGIVAPISCRGYATTEPSPSATSTTTTTTARRRTTFKDKLNAGPSFADFVGNDNAPLDPSEAYALKTALVGPAGRKKEMTRLPSWLKTPIPDSKNYQRLKKDLRGLNLHTVCEEARCPNISDCWGGSDKSAATATIMLMGDTCTRGCRFCSVKTSRTPSPLDPHEPENTAEAISRWGLGYVVLTSVDRDDLADGGARHFAETVMKIKQKAPSILVECLTGDYAGDLEMVKLVARSGLDVYAHNVETVEALTPQVRDRRANFQQSIRVLEAAKNAQPSLITKTSLMLGLGETDEQLWDALRQLRVVNVDVVTFGQYMRPTKRHMAVHEYVTPDRFELWRQRALDMGFLYCASGPLVRSSYKAGEAFIENVLKKRRAASGSTETVGVRPVAVDEVTR</sequence>
<evidence type="ECO:0000255" key="1">
    <source>
        <dbReference type="HAMAP-Rule" id="MF_03123"/>
    </source>
</evidence>
<evidence type="ECO:0000255" key="2">
    <source>
        <dbReference type="PROSITE-ProRule" id="PRU01266"/>
    </source>
</evidence>
<evidence type="ECO:0000256" key="3">
    <source>
        <dbReference type="SAM" id="MobiDB-lite"/>
    </source>
</evidence>
<dbReference type="EC" id="2.8.1.8" evidence="1"/>
<dbReference type="EMBL" id="DS027690">
    <property type="protein sequence ID" value="EAW21899.1"/>
    <property type="molecule type" value="Genomic_DNA"/>
</dbReference>
<dbReference type="RefSeq" id="XP_001263796.1">
    <property type="nucleotide sequence ID" value="XM_001263795.1"/>
</dbReference>
<dbReference type="SMR" id="A1D855"/>
<dbReference type="STRING" id="331117.A1D855"/>
<dbReference type="EnsemblFungi" id="EAW21899">
    <property type="protein sequence ID" value="EAW21899"/>
    <property type="gene ID" value="NFIA_070700"/>
</dbReference>
<dbReference type="GeneID" id="4590442"/>
<dbReference type="KEGG" id="nfi:NFIA_070700"/>
<dbReference type="VEuPathDB" id="FungiDB:NFIA_070700"/>
<dbReference type="eggNOG" id="KOG2672">
    <property type="taxonomic scope" value="Eukaryota"/>
</dbReference>
<dbReference type="HOGENOM" id="CLU_033144_2_0_1"/>
<dbReference type="OMA" id="PYCDIDF"/>
<dbReference type="OrthoDB" id="3231at2759"/>
<dbReference type="UniPathway" id="UPA00538">
    <property type="reaction ID" value="UER00593"/>
</dbReference>
<dbReference type="Proteomes" id="UP000006702">
    <property type="component" value="Unassembled WGS sequence"/>
</dbReference>
<dbReference type="GO" id="GO:0005739">
    <property type="term" value="C:mitochondrion"/>
    <property type="evidence" value="ECO:0007669"/>
    <property type="project" value="UniProtKB-SubCell"/>
</dbReference>
<dbReference type="GO" id="GO:0051539">
    <property type="term" value="F:4 iron, 4 sulfur cluster binding"/>
    <property type="evidence" value="ECO:0007669"/>
    <property type="project" value="UniProtKB-UniRule"/>
</dbReference>
<dbReference type="GO" id="GO:0016992">
    <property type="term" value="F:lipoate synthase activity"/>
    <property type="evidence" value="ECO:0007669"/>
    <property type="project" value="UniProtKB-UniRule"/>
</dbReference>
<dbReference type="GO" id="GO:0046872">
    <property type="term" value="F:metal ion binding"/>
    <property type="evidence" value="ECO:0007669"/>
    <property type="project" value="UniProtKB-KW"/>
</dbReference>
<dbReference type="CDD" id="cd01335">
    <property type="entry name" value="Radical_SAM"/>
    <property type="match status" value="1"/>
</dbReference>
<dbReference type="FunFam" id="3.20.20.70:FF:000036">
    <property type="entry name" value="Lipoyl synthase, mitochondrial"/>
    <property type="match status" value="1"/>
</dbReference>
<dbReference type="Gene3D" id="3.20.20.70">
    <property type="entry name" value="Aldolase class I"/>
    <property type="match status" value="1"/>
</dbReference>
<dbReference type="HAMAP" id="MF_00206">
    <property type="entry name" value="Lipoyl_synth"/>
    <property type="match status" value="1"/>
</dbReference>
<dbReference type="InterPro" id="IPR013785">
    <property type="entry name" value="Aldolase_TIM"/>
</dbReference>
<dbReference type="InterPro" id="IPR006638">
    <property type="entry name" value="Elp3/MiaA/NifB-like_rSAM"/>
</dbReference>
<dbReference type="InterPro" id="IPR031691">
    <property type="entry name" value="LIAS_N"/>
</dbReference>
<dbReference type="InterPro" id="IPR003698">
    <property type="entry name" value="Lipoyl_synth"/>
</dbReference>
<dbReference type="InterPro" id="IPR007197">
    <property type="entry name" value="rSAM"/>
</dbReference>
<dbReference type="NCBIfam" id="TIGR00510">
    <property type="entry name" value="lipA"/>
    <property type="match status" value="1"/>
</dbReference>
<dbReference type="NCBIfam" id="NF004019">
    <property type="entry name" value="PRK05481.1"/>
    <property type="match status" value="1"/>
</dbReference>
<dbReference type="NCBIfam" id="NF009544">
    <property type="entry name" value="PRK12928.1"/>
    <property type="match status" value="1"/>
</dbReference>
<dbReference type="PANTHER" id="PTHR10949">
    <property type="entry name" value="LIPOYL SYNTHASE"/>
    <property type="match status" value="1"/>
</dbReference>
<dbReference type="PANTHER" id="PTHR10949:SF0">
    <property type="entry name" value="LIPOYL SYNTHASE, MITOCHONDRIAL"/>
    <property type="match status" value="1"/>
</dbReference>
<dbReference type="Pfam" id="PF16881">
    <property type="entry name" value="LIAS_N"/>
    <property type="match status" value="1"/>
</dbReference>
<dbReference type="Pfam" id="PF04055">
    <property type="entry name" value="Radical_SAM"/>
    <property type="match status" value="1"/>
</dbReference>
<dbReference type="SFLD" id="SFLDF00271">
    <property type="entry name" value="lipoyl_synthase"/>
    <property type="match status" value="1"/>
</dbReference>
<dbReference type="SFLD" id="SFLDG01058">
    <property type="entry name" value="lipoyl_synthase_like"/>
    <property type="match status" value="1"/>
</dbReference>
<dbReference type="SMART" id="SM00729">
    <property type="entry name" value="Elp3"/>
    <property type="match status" value="1"/>
</dbReference>
<dbReference type="SUPFAM" id="SSF102114">
    <property type="entry name" value="Radical SAM enzymes"/>
    <property type="match status" value="1"/>
</dbReference>
<dbReference type="PROSITE" id="PS51918">
    <property type="entry name" value="RADICAL_SAM"/>
    <property type="match status" value="1"/>
</dbReference>
<organism>
    <name type="scientific">Neosartorya fischeri (strain ATCC 1020 / DSM 3700 / CBS 544.65 / FGSC A1164 / JCM 1740 / NRRL 181 / WB 181)</name>
    <name type="common">Aspergillus fischerianus</name>
    <dbReference type="NCBI Taxonomy" id="331117"/>
    <lineage>
        <taxon>Eukaryota</taxon>
        <taxon>Fungi</taxon>
        <taxon>Dikarya</taxon>
        <taxon>Ascomycota</taxon>
        <taxon>Pezizomycotina</taxon>
        <taxon>Eurotiomycetes</taxon>
        <taxon>Eurotiomycetidae</taxon>
        <taxon>Eurotiales</taxon>
        <taxon>Aspergillaceae</taxon>
        <taxon>Aspergillus</taxon>
        <taxon>Aspergillus subgen. Fumigati</taxon>
    </lineage>
</organism>